<accession>P19289</accession>
<sequence length="141" mass="15300">MSSPIISNYLEGIRDNKYLQRIEWEIQVAQSGFRAIPITERWWGEASYYIDLANKIKALPELSNVKTKPIGYALAAARYVKHNNFGMAEIYLDRFESALVRSGLSRDMARRVREHVAKMIGLGGGGGGGGGGGGGGGVSLP</sequence>
<protein>
    <recommendedName>
        <fullName>Uncharacterized 15.3 kDa protein</fullName>
    </recommendedName>
</protein>
<reference key="1">
    <citation type="submission" date="1989-03" db="EMBL/GenBank/DDBJ databases">
        <authorList>
            <person name="Neumann H."/>
        </authorList>
    </citation>
    <scope>NUCLEOTIDE SEQUENCE [GENOMIC DNA]</scope>
</reference>
<dbReference type="EMBL" id="X14855">
    <property type="protein sequence ID" value="CAA32983.1"/>
    <property type="molecule type" value="Genomic_DNA"/>
</dbReference>
<dbReference type="Proteomes" id="UP000009250">
    <property type="component" value="Genome"/>
</dbReference>
<organismHost>
    <name type="scientific">Thermoproteus tenax</name>
    <dbReference type="NCBI Taxonomy" id="2271"/>
</organismHost>
<organism>
    <name type="scientific">Thermoproteus tenax virus 1 (strain KRA1)</name>
    <name type="common">TTV1</name>
    <dbReference type="NCBI Taxonomy" id="10480"/>
    <lineage>
        <taxon>Viruses</taxon>
        <taxon>Adnaviria</taxon>
        <taxon>Zilligvirae</taxon>
        <taxon>Taleaviricota</taxon>
        <taxon>Tokiviricetes</taxon>
        <taxon>Primavirales</taxon>
        <taxon>Tristromaviridae</taxon>
        <taxon>Betatristromavirus</taxon>
        <taxon>Betatristromavirus TTV1</taxon>
    </lineage>
</organism>
<name>YORE_TTV1K</name>
<proteinExistence type="predicted"/>
<feature type="chain" id="PRO_0000222971" description="Uncharacterized 15.3 kDa protein">
    <location>
        <begin position="1"/>
        <end position="141"/>
    </location>
</feature>
<keyword id="KW-1185">Reference proteome</keyword>